<comment type="function">
    <text evidence="1">Sequence-specific, AT-rich binding transcription factor which is part of a developmental regulatory system that provides cells with specific positional identities on the anterior-posterior axis.</text>
</comment>
<comment type="subunit">
    <text evidence="3 4">Binds DNA as a homodimer. Interacts with MEIS1, MEIS2 and MEIS3.</text>
</comment>
<comment type="interaction">
    <interactant intactId="EBI-925160">
        <id>Q62424</id>
    </interactant>
    <interactant intactId="EBI-445723">
        <id>Q60954-2</id>
        <label>Meis1</label>
    </interactant>
    <organismsDiffer>false</organismsDiffer>
    <experiments>3</experiments>
</comment>
<comment type="interaction">
    <interactant intactId="EBI-925160">
        <id>Q62424</id>
    </interactant>
    <interactant intactId="EBI-7066475">
        <id>P97454</id>
        <label>Smad5</label>
    </interactant>
    <organismsDiffer>false</organismsDiffer>
    <experiments>3</experiments>
</comment>
<comment type="subcellular location">
    <subcellularLocation>
        <location>Nucleus</location>
    </subcellularLocation>
</comment>
<comment type="disease">
    <text>Defects in Hoxa13 are the cause of hypodactyly (Hd), a condition characterized by profound deficiency of digital arch structures.</text>
</comment>
<comment type="similarity">
    <text evidence="5">Belongs to the Abd-B homeobox family.</text>
</comment>
<reference key="1">
    <citation type="journal article" date="1996" name="Nat. Genet.">
        <title>The molecular basis of hypodactyly (Hd): a deletion in Hoxa 13 leads to arrest of digital arch formation.</title>
        <authorList>
            <person name="Mortlock D.P."/>
            <person name="Post L.C."/>
            <person name="Innis J.W."/>
        </authorList>
    </citation>
    <scope>NUCLEOTIDE SEQUENCE [GENOMIC DNA]</scope>
</reference>
<reference key="2">
    <citation type="journal article" date="2005" name="Dev. Biol.">
        <title>Range of HOX/TALE superclass associations and protein domain requirements for HOXA13:MEIS interaction.</title>
        <authorList>
            <person name="Williams T.M."/>
            <person name="Williams M.E."/>
            <person name="Innis J.W."/>
        </authorList>
    </citation>
    <scope>INTERACTION WITH MEIS1; MEIS2 AND MEIS3</scope>
</reference>
<reference key="3">
    <citation type="journal article" date="2011" name="PLoS ONE">
        <title>Structural basis for sequence specific DNA binding and protein dimerization of HOXA13.</title>
        <authorList>
            <person name="Zhang Y."/>
            <person name="Larsen C.A."/>
            <person name="Stadler H.S."/>
            <person name="Ames J.B."/>
        </authorList>
    </citation>
    <scope>STRUCTURE BY NMR OF 320-386 IN COMPLEX WITH DNA</scope>
    <scope>SUBUNIT</scope>
    <scope>MUTAGENESIS OF ILE-366; ASN-370 AND VAL-373</scope>
</reference>
<dbReference type="EMBL" id="U59322">
    <property type="protein sequence ID" value="AAB03322.1"/>
    <property type="molecule type" value="Genomic_DNA"/>
</dbReference>
<dbReference type="RefSeq" id="NP_032290.1">
    <property type="nucleotide sequence ID" value="NM_008264.1"/>
</dbReference>
<dbReference type="PDB" id="2LD5">
    <property type="method" value="NMR"/>
    <property type="chains" value="A=320-386"/>
</dbReference>
<dbReference type="PDBsum" id="2LD5"/>
<dbReference type="BMRB" id="Q62424"/>
<dbReference type="SMR" id="Q62424"/>
<dbReference type="BioGRID" id="200366">
    <property type="interactions" value="4"/>
</dbReference>
<dbReference type="FunCoup" id="Q62424">
    <property type="interactions" value="1097"/>
</dbReference>
<dbReference type="IntAct" id="Q62424">
    <property type="interactions" value="6"/>
</dbReference>
<dbReference type="STRING" id="10090.ENSMUSP00000039170"/>
<dbReference type="PhosphoSitePlus" id="Q62424"/>
<dbReference type="PaxDb" id="10090-ENSMUSP00000039170"/>
<dbReference type="ProteomicsDB" id="273359"/>
<dbReference type="Antibodypedia" id="12410">
    <property type="antibodies" value="150 antibodies from 26 providers"/>
</dbReference>
<dbReference type="DNASU" id="15398"/>
<dbReference type="Ensembl" id="ENSMUST00000147595.7">
    <property type="protein sequence ID" value="ENSMUSP00000125221.7"/>
    <property type="gene ID" value="ENSMUSG00000038203.23"/>
</dbReference>
<dbReference type="GeneID" id="15398"/>
<dbReference type="KEGG" id="mmu:15398"/>
<dbReference type="UCSC" id="uc029vvl.1">
    <property type="organism name" value="mouse"/>
</dbReference>
<dbReference type="AGR" id="MGI:96173"/>
<dbReference type="CTD" id="3209"/>
<dbReference type="MGI" id="MGI:96173">
    <property type="gene designation" value="Hoxa13"/>
</dbReference>
<dbReference type="eggNOG" id="KOG0487">
    <property type="taxonomic scope" value="Eukaryota"/>
</dbReference>
<dbReference type="GeneTree" id="ENSGT00940000162322"/>
<dbReference type="InParanoid" id="Q62424"/>
<dbReference type="OMA" id="CPKEQNQ"/>
<dbReference type="OrthoDB" id="6159439at2759"/>
<dbReference type="PhylomeDB" id="Q62424"/>
<dbReference type="BioGRID-ORCS" id="15398">
    <property type="hits" value="3 hits in 72 CRISPR screens"/>
</dbReference>
<dbReference type="EvolutionaryTrace" id="Q62424"/>
<dbReference type="PRO" id="PR:Q62424"/>
<dbReference type="Proteomes" id="UP000000589">
    <property type="component" value="Chromosome 6"/>
</dbReference>
<dbReference type="RNAct" id="Q62424">
    <property type="molecule type" value="protein"/>
</dbReference>
<dbReference type="Bgee" id="ENSMUSG00000038203">
    <property type="expression patterns" value="Expressed in phalanx and 98 other cell types or tissues"/>
</dbReference>
<dbReference type="ExpressionAtlas" id="Q62424">
    <property type="expression patterns" value="baseline and differential"/>
</dbReference>
<dbReference type="GO" id="GO:0005694">
    <property type="term" value="C:chromosome"/>
    <property type="evidence" value="ECO:0007669"/>
    <property type="project" value="Ensembl"/>
</dbReference>
<dbReference type="GO" id="GO:0045111">
    <property type="term" value="C:intermediate filament cytoskeleton"/>
    <property type="evidence" value="ECO:0007669"/>
    <property type="project" value="Ensembl"/>
</dbReference>
<dbReference type="GO" id="GO:0005654">
    <property type="term" value="C:nucleoplasm"/>
    <property type="evidence" value="ECO:0007669"/>
    <property type="project" value="Ensembl"/>
</dbReference>
<dbReference type="GO" id="GO:0005634">
    <property type="term" value="C:nucleus"/>
    <property type="evidence" value="ECO:0000314"/>
    <property type="project" value="MGI"/>
</dbReference>
<dbReference type="GO" id="GO:0000987">
    <property type="term" value="F:cis-regulatory region sequence-specific DNA binding"/>
    <property type="evidence" value="ECO:0000314"/>
    <property type="project" value="MGI"/>
</dbReference>
<dbReference type="GO" id="GO:0003677">
    <property type="term" value="F:DNA binding"/>
    <property type="evidence" value="ECO:0000314"/>
    <property type="project" value="MGI"/>
</dbReference>
<dbReference type="GO" id="GO:0001228">
    <property type="term" value="F:DNA-binding transcription activator activity, RNA polymerase II-specific"/>
    <property type="evidence" value="ECO:0000314"/>
    <property type="project" value="MGI"/>
</dbReference>
<dbReference type="GO" id="GO:0003700">
    <property type="term" value="F:DNA-binding transcription factor activity"/>
    <property type="evidence" value="ECO:0000314"/>
    <property type="project" value="MGI"/>
</dbReference>
<dbReference type="GO" id="GO:0000978">
    <property type="term" value="F:RNA polymerase II cis-regulatory region sequence-specific DNA binding"/>
    <property type="evidence" value="ECO:0000315"/>
    <property type="project" value="NTNU_SB"/>
</dbReference>
<dbReference type="GO" id="GO:0000976">
    <property type="term" value="F:transcription cis-regulatory region binding"/>
    <property type="evidence" value="ECO:0000314"/>
    <property type="project" value="MGI"/>
</dbReference>
<dbReference type="GO" id="GO:0009653">
    <property type="term" value="P:anatomical structure morphogenesis"/>
    <property type="evidence" value="ECO:0000315"/>
    <property type="project" value="MGI"/>
</dbReference>
<dbReference type="GO" id="GO:0009887">
    <property type="term" value="P:animal organ morphogenesis"/>
    <property type="evidence" value="ECO:0000315"/>
    <property type="project" value="MGI"/>
</dbReference>
<dbReference type="GO" id="GO:0048844">
    <property type="term" value="P:artery morphogenesis"/>
    <property type="evidence" value="ECO:0000315"/>
    <property type="project" value="MGI"/>
</dbReference>
<dbReference type="GO" id="GO:0060442">
    <property type="term" value="P:branching involved in prostate gland morphogenesis"/>
    <property type="evidence" value="ECO:0000315"/>
    <property type="project" value="MGI"/>
</dbReference>
<dbReference type="GO" id="GO:0035115">
    <property type="term" value="P:embryonic forelimb morphogenesis"/>
    <property type="evidence" value="ECO:0000315"/>
    <property type="project" value="MGI"/>
</dbReference>
<dbReference type="GO" id="GO:0048619">
    <property type="term" value="P:embryonic hindgut morphogenesis"/>
    <property type="evidence" value="ECO:0007669"/>
    <property type="project" value="Ensembl"/>
</dbReference>
<dbReference type="GO" id="GO:0060847">
    <property type="term" value="P:endothelial cell fate specification"/>
    <property type="evidence" value="ECO:0000315"/>
    <property type="project" value="MGI"/>
</dbReference>
<dbReference type="GO" id="GO:0001886">
    <property type="term" value="P:endothelial cell morphogenesis"/>
    <property type="evidence" value="ECO:0000315"/>
    <property type="project" value="MGI"/>
</dbReference>
<dbReference type="GO" id="GO:0048839">
    <property type="term" value="P:inner ear development"/>
    <property type="evidence" value="ECO:0000315"/>
    <property type="project" value="MGI"/>
</dbReference>
<dbReference type="GO" id="GO:0030539">
    <property type="term" value="P:male genitalia development"/>
    <property type="evidence" value="ECO:0000315"/>
    <property type="project" value="MGI"/>
</dbReference>
<dbReference type="GO" id="GO:0097152">
    <property type="term" value="P:mesenchymal cell apoptotic process"/>
    <property type="evidence" value="ECO:0000315"/>
    <property type="project" value="MGI"/>
</dbReference>
<dbReference type="GO" id="GO:0140014">
    <property type="term" value="P:mitotic nuclear division"/>
    <property type="evidence" value="ECO:0000315"/>
    <property type="project" value="MGI"/>
</dbReference>
<dbReference type="GO" id="GO:2001055">
    <property type="term" value="P:positive regulation of mesenchymal cell apoptotic process"/>
    <property type="evidence" value="ECO:0000315"/>
    <property type="project" value="MGI"/>
</dbReference>
<dbReference type="GO" id="GO:0045840">
    <property type="term" value="P:positive regulation of mitotic nuclear division"/>
    <property type="evidence" value="ECO:0000315"/>
    <property type="project" value="MGI"/>
</dbReference>
<dbReference type="GO" id="GO:0045944">
    <property type="term" value="P:positive regulation of transcription by RNA polymerase II"/>
    <property type="evidence" value="ECO:0000314"/>
    <property type="project" value="NTNU_SB"/>
</dbReference>
<dbReference type="GO" id="GO:0030510">
    <property type="term" value="P:regulation of BMP signaling pathway"/>
    <property type="evidence" value="ECO:0000315"/>
    <property type="project" value="MGI"/>
</dbReference>
<dbReference type="GO" id="GO:0033574">
    <property type="term" value="P:response to testosterone"/>
    <property type="evidence" value="ECO:0007669"/>
    <property type="project" value="Ensembl"/>
</dbReference>
<dbReference type="GO" id="GO:0001894">
    <property type="term" value="P:tissue homeostasis"/>
    <property type="evidence" value="ECO:0000315"/>
    <property type="project" value="MGI"/>
</dbReference>
<dbReference type="GO" id="GO:0006366">
    <property type="term" value="P:transcription by RNA polymerase II"/>
    <property type="evidence" value="ECO:0000314"/>
    <property type="project" value="MGI"/>
</dbReference>
<dbReference type="GO" id="GO:0001570">
    <property type="term" value="P:vasculogenesis"/>
    <property type="evidence" value="ECO:0000315"/>
    <property type="project" value="MGI"/>
</dbReference>
<dbReference type="GO" id="GO:0003281">
    <property type="term" value="P:ventricular septum development"/>
    <property type="evidence" value="ECO:0000315"/>
    <property type="project" value="MGI"/>
</dbReference>
<dbReference type="CDD" id="cd00086">
    <property type="entry name" value="homeodomain"/>
    <property type="match status" value="1"/>
</dbReference>
<dbReference type="FunFam" id="1.10.10.60:FF:000130">
    <property type="entry name" value="Homeobox protein Hox-D12"/>
    <property type="match status" value="1"/>
</dbReference>
<dbReference type="Gene3D" id="1.10.10.60">
    <property type="entry name" value="Homeodomain-like"/>
    <property type="match status" value="1"/>
</dbReference>
<dbReference type="InterPro" id="IPR051003">
    <property type="entry name" value="AP_axis_regulatory_Homeobox"/>
</dbReference>
<dbReference type="InterPro" id="IPR001356">
    <property type="entry name" value="HD"/>
</dbReference>
<dbReference type="InterPro" id="IPR017970">
    <property type="entry name" value="Homeobox_CS"/>
</dbReference>
<dbReference type="InterPro" id="IPR009057">
    <property type="entry name" value="Homeodomain-like_sf"/>
</dbReference>
<dbReference type="InterPro" id="IPR022067">
    <property type="entry name" value="HoxA13_N"/>
</dbReference>
<dbReference type="PANTHER" id="PTHR45804:SF3">
    <property type="entry name" value="HOMEOBOX PROTEIN HOX-A13"/>
    <property type="match status" value="1"/>
</dbReference>
<dbReference type="PANTHER" id="PTHR45804">
    <property type="entry name" value="SEGMENTATION PROTEIN FUSHI TARAZU-LIKE PROTEIN"/>
    <property type="match status" value="1"/>
</dbReference>
<dbReference type="Pfam" id="PF00046">
    <property type="entry name" value="Homeodomain"/>
    <property type="match status" value="1"/>
</dbReference>
<dbReference type="Pfam" id="PF12284">
    <property type="entry name" value="HoxA13_N"/>
    <property type="match status" value="1"/>
</dbReference>
<dbReference type="SMART" id="SM00389">
    <property type="entry name" value="HOX"/>
    <property type="match status" value="1"/>
</dbReference>
<dbReference type="SUPFAM" id="SSF46689">
    <property type="entry name" value="Homeodomain-like"/>
    <property type="match status" value="1"/>
</dbReference>
<dbReference type="PROSITE" id="PS00027">
    <property type="entry name" value="HOMEOBOX_1"/>
    <property type="match status" value="1"/>
</dbReference>
<dbReference type="PROSITE" id="PS50071">
    <property type="entry name" value="HOMEOBOX_2"/>
    <property type="match status" value="1"/>
</dbReference>
<proteinExistence type="evidence at protein level"/>
<protein>
    <recommendedName>
        <fullName>Homeobox protein Hox-A13</fullName>
    </recommendedName>
    <alternativeName>
        <fullName>Homeobox protein Hox-1.10</fullName>
    </alternativeName>
</protein>
<accession>Q62424</accession>
<evidence type="ECO:0000250" key="1"/>
<evidence type="ECO:0000255" key="2">
    <source>
        <dbReference type="PROSITE-ProRule" id="PRU00108"/>
    </source>
</evidence>
<evidence type="ECO:0000269" key="3">
    <source>
    </source>
</evidence>
<evidence type="ECO:0000269" key="4">
    <source>
    </source>
</evidence>
<evidence type="ECO:0000305" key="5"/>
<evidence type="ECO:0007829" key="6">
    <source>
        <dbReference type="PDB" id="2LD5"/>
    </source>
</evidence>
<gene>
    <name type="primary">Hoxa13</name>
    <name type="synonym">Hox-1.10</name>
</gene>
<name>HXA13_MOUSE</name>
<feature type="chain" id="PRO_0000200102" description="Homeobox protein Hox-A13">
    <location>
        <begin position="1"/>
        <end position="386"/>
    </location>
</feature>
<feature type="DNA-binding region" description="Homeobox" evidence="2">
    <location>
        <begin position="320"/>
        <end position="379"/>
    </location>
</feature>
<feature type="mutagenesis site" description="Decreased DNA binding and transcriptional activity." evidence="4">
    <original>I</original>
    <variation>A</variation>
    <location>
        <position position="366"/>
    </location>
</feature>
<feature type="mutagenesis site" description="Decreased DNA binding and transcriptional activity." evidence="4">
    <original>N</original>
    <variation>A</variation>
    <location>
        <position position="370"/>
    </location>
</feature>
<feature type="mutagenesis site" description="Decreased DNA binding and transcriptional activity." evidence="4">
    <original>V</original>
    <variation>A</variation>
    <location>
        <position position="373"/>
    </location>
</feature>
<feature type="helix" evidence="6">
    <location>
        <begin position="329"/>
        <end position="341"/>
    </location>
</feature>
<feature type="helix" evidence="6">
    <location>
        <begin position="347"/>
        <end position="357"/>
    </location>
</feature>
<feature type="helix" evidence="6">
    <location>
        <begin position="362"/>
        <end position="381"/>
    </location>
</feature>
<organism>
    <name type="scientific">Mus musculus</name>
    <name type="common">Mouse</name>
    <dbReference type="NCBI Taxonomy" id="10090"/>
    <lineage>
        <taxon>Eukaryota</taxon>
        <taxon>Metazoa</taxon>
        <taxon>Chordata</taxon>
        <taxon>Craniata</taxon>
        <taxon>Vertebrata</taxon>
        <taxon>Euteleostomi</taxon>
        <taxon>Mammalia</taxon>
        <taxon>Eutheria</taxon>
        <taxon>Euarchontoglires</taxon>
        <taxon>Glires</taxon>
        <taxon>Rodentia</taxon>
        <taxon>Myomorpha</taxon>
        <taxon>Muroidea</taxon>
        <taxon>Muridae</taxon>
        <taxon>Murinae</taxon>
        <taxon>Mus</taxon>
        <taxon>Mus</taxon>
    </lineage>
</organism>
<keyword id="KW-0002">3D-structure</keyword>
<keyword id="KW-0217">Developmental protein</keyword>
<keyword id="KW-0238">DNA-binding</keyword>
<keyword id="KW-0371">Homeobox</keyword>
<keyword id="KW-0539">Nucleus</keyword>
<keyword id="KW-1185">Reference proteome</keyword>
<keyword id="KW-0804">Transcription</keyword>
<keyword id="KW-0805">Transcription regulation</keyword>
<sequence length="386" mass="39567">MTASVLLHPRWIEPTVMFLYDNGGGLVADELNKNMEGAAAAAAAAAAAAAAGAGGGGFPHPAAAAAGGNFSVAAAAAAAAAAAANQCRNLMAHPAPLAPGAAAAYSSAPGEAPPSAAAAAAAAAAAAAAAAAASSSGGPGPAGPAGAEAAKQCSPCSAAAQSSSGPAALPYGYFGSGYYPCARMGPHPNAIKSCAQPASAAAAFADKYMDTAGPAAEEFSSRAKEFAFYHQGYAAGPYHHHQPVPGYLDMPVVPGLGGPGESRHEPLGLPMESYQPWALPNGWNGQMYCPKEQTQPPHLWKSTLPDVVSHPSDASSYRRGRKKRVPYTKVQLKELEREYATNKFITKDKRRRISATTNLSERQVTIWFQNRRVKEKKVINKLKTTS</sequence>